<evidence type="ECO:0000255" key="1">
    <source>
        <dbReference type="HAMAP-Rule" id="MF_01013"/>
    </source>
</evidence>
<sequence length="258" mass="28278">MLAKRIIPCLDVRDGQVVKGVQFRNHEIIGDIVPLAKRYADEGADELVFYDITASSDGRVVDKSWVSRVAEVIDIPFCVAGGIKSLEDAAQILSFGADKISINSPALADPTLITRLADRFGVQCIVVGIDTWFDAETGKYHVNQYTGDETRTRVTQWETLDWVEEVQKRGAGEIVLNMMNQDGVRNGYDLQQLAKVRAVCHVPLIASGGAGTMEHFLEAFRDANVDGALAASVFHKQIINIGELKAYLAAQGVEIRVC</sequence>
<feature type="chain" id="PRO_1000135010" description="Imidazole glycerol phosphate synthase subunit HisF">
    <location>
        <begin position="1"/>
        <end position="258"/>
    </location>
</feature>
<feature type="active site" evidence="1">
    <location>
        <position position="11"/>
    </location>
</feature>
<feature type="active site" evidence="1">
    <location>
        <position position="130"/>
    </location>
</feature>
<reference key="1">
    <citation type="journal article" date="2008" name="PLoS Genet.">
        <title>Complete genome sequence of the N2-fixing broad host range endophyte Klebsiella pneumoniae 342 and virulence predictions verified in mice.</title>
        <authorList>
            <person name="Fouts D.E."/>
            <person name="Tyler H.L."/>
            <person name="DeBoy R.T."/>
            <person name="Daugherty S."/>
            <person name="Ren Q."/>
            <person name="Badger J.H."/>
            <person name="Durkin A.S."/>
            <person name="Huot H."/>
            <person name="Shrivastava S."/>
            <person name="Kothari S."/>
            <person name="Dodson R.J."/>
            <person name="Mohamoud Y."/>
            <person name="Khouri H."/>
            <person name="Roesch L.F.W."/>
            <person name="Krogfelt K.A."/>
            <person name="Struve C."/>
            <person name="Triplett E.W."/>
            <person name="Methe B.A."/>
        </authorList>
    </citation>
    <scope>NUCLEOTIDE SEQUENCE [LARGE SCALE GENOMIC DNA]</scope>
    <source>
        <strain>342</strain>
    </source>
</reference>
<protein>
    <recommendedName>
        <fullName evidence="1">Imidazole glycerol phosphate synthase subunit HisF</fullName>
        <ecNumber evidence="1">4.3.2.10</ecNumber>
    </recommendedName>
    <alternativeName>
        <fullName evidence="1">IGP synthase cyclase subunit</fullName>
    </alternativeName>
    <alternativeName>
        <fullName evidence="1">IGP synthase subunit HisF</fullName>
    </alternativeName>
    <alternativeName>
        <fullName evidence="1">ImGP synthase subunit HisF</fullName>
        <shortName evidence="1">IGPS subunit HisF</shortName>
    </alternativeName>
</protein>
<proteinExistence type="inferred from homology"/>
<accession>B5XPE2</accession>
<keyword id="KW-0028">Amino-acid biosynthesis</keyword>
<keyword id="KW-0963">Cytoplasm</keyword>
<keyword id="KW-0368">Histidine biosynthesis</keyword>
<keyword id="KW-0456">Lyase</keyword>
<name>HIS6_KLEP3</name>
<dbReference type="EC" id="4.3.2.10" evidence="1"/>
<dbReference type="EMBL" id="CP000964">
    <property type="protein sequence ID" value="ACI08571.1"/>
    <property type="molecule type" value="Genomic_DNA"/>
</dbReference>
<dbReference type="SMR" id="B5XPE2"/>
<dbReference type="KEGG" id="kpe:KPK_1684"/>
<dbReference type="HOGENOM" id="CLU_048577_4_0_6"/>
<dbReference type="UniPathway" id="UPA00031">
    <property type="reaction ID" value="UER00010"/>
</dbReference>
<dbReference type="Proteomes" id="UP000001734">
    <property type="component" value="Chromosome"/>
</dbReference>
<dbReference type="GO" id="GO:0005737">
    <property type="term" value="C:cytoplasm"/>
    <property type="evidence" value="ECO:0007669"/>
    <property type="project" value="UniProtKB-SubCell"/>
</dbReference>
<dbReference type="GO" id="GO:0000107">
    <property type="term" value="F:imidazoleglycerol-phosphate synthase activity"/>
    <property type="evidence" value="ECO:0007669"/>
    <property type="project" value="UniProtKB-UniRule"/>
</dbReference>
<dbReference type="GO" id="GO:0016829">
    <property type="term" value="F:lyase activity"/>
    <property type="evidence" value="ECO:0007669"/>
    <property type="project" value="UniProtKB-KW"/>
</dbReference>
<dbReference type="GO" id="GO:0000105">
    <property type="term" value="P:L-histidine biosynthetic process"/>
    <property type="evidence" value="ECO:0007669"/>
    <property type="project" value="UniProtKB-UniRule"/>
</dbReference>
<dbReference type="CDD" id="cd04731">
    <property type="entry name" value="HisF"/>
    <property type="match status" value="1"/>
</dbReference>
<dbReference type="FunFam" id="3.20.20.70:FF:000006">
    <property type="entry name" value="Imidazole glycerol phosphate synthase subunit HisF"/>
    <property type="match status" value="1"/>
</dbReference>
<dbReference type="Gene3D" id="3.20.20.70">
    <property type="entry name" value="Aldolase class I"/>
    <property type="match status" value="1"/>
</dbReference>
<dbReference type="HAMAP" id="MF_01013">
    <property type="entry name" value="HisF"/>
    <property type="match status" value="1"/>
</dbReference>
<dbReference type="InterPro" id="IPR013785">
    <property type="entry name" value="Aldolase_TIM"/>
</dbReference>
<dbReference type="InterPro" id="IPR006062">
    <property type="entry name" value="His_biosynth"/>
</dbReference>
<dbReference type="InterPro" id="IPR004651">
    <property type="entry name" value="HisF"/>
</dbReference>
<dbReference type="InterPro" id="IPR050064">
    <property type="entry name" value="IGPS_HisA/HisF"/>
</dbReference>
<dbReference type="InterPro" id="IPR011060">
    <property type="entry name" value="RibuloseP-bd_barrel"/>
</dbReference>
<dbReference type="NCBIfam" id="TIGR00735">
    <property type="entry name" value="hisF"/>
    <property type="match status" value="1"/>
</dbReference>
<dbReference type="PANTHER" id="PTHR21235:SF2">
    <property type="entry name" value="IMIDAZOLE GLYCEROL PHOSPHATE SYNTHASE HISHF"/>
    <property type="match status" value="1"/>
</dbReference>
<dbReference type="PANTHER" id="PTHR21235">
    <property type="entry name" value="IMIDAZOLE GLYCEROL PHOSPHATE SYNTHASE SUBUNIT HISF/H IGP SYNTHASE SUBUNIT HISF/H"/>
    <property type="match status" value="1"/>
</dbReference>
<dbReference type="Pfam" id="PF00977">
    <property type="entry name" value="His_biosynth"/>
    <property type="match status" value="1"/>
</dbReference>
<dbReference type="SUPFAM" id="SSF51366">
    <property type="entry name" value="Ribulose-phoshate binding barrel"/>
    <property type="match status" value="1"/>
</dbReference>
<gene>
    <name evidence="1" type="primary">hisF</name>
    <name type="ordered locus">KPK_1684</name>
</gene>
<comment type="function">
    <text evidence="1">IGPS catalyzes the conversion of PRFAR and glutamine to IGP, AICAR and glutamate. The HisF subunit catalyzes the cyclization activity that produces IGP and AICAR from PRFAR using the ammonia provided by the HisH subunit.</text>
</comment>
<comment type="catalytic activity">
    <reaction evidence="1">
        <text>5-[(5-phospho-1-deoxy-D-ribulos-1-ylimino)methylamino]-1-(5-phospho-beta-D-ribosyl)imidazole-4-carboxamide + L-glutamine = D-erythro-1-(imidazol-4-yl)glycerol 3-phosphate + 5-amino-1-(5-phospho-beta-D-ribosyl)imidazole-4-carboxamide + L-glutamate + H(+)</text>
        <dbReference type="Rhea" id="RHEA:24793"/>
        <dbReference type="ChEBI" id="CHEBI:15378"/>
        <dbReference type="ChEBI" id="CHEBI:29985"/>
        <dbReference type="ChEBI" id="CHEBI:58278"/>
        <dbReference type="ChEBI" id="CHEBI:58359"/>
        <dbReference type="ChEBI" id="CHEBI:58475"/>
        <dbReference type="ChEBI" id="CHEBI:58525"/>
        <dbReference type="EC" id="4.3.2.10"/>
    </reaction>
</comment>
<comment type="pathway">
    <text evidence="1">Amino-acid biosynthesis; L-histidine biosynthesis; L-histidine from 5-phospho-alpha-D-ribose 1-diphosphate: step 5/9.</text>
</comment>
<comment type="subunit">
    <text evidence="1">Heterodimer of HisH and HisF.</text>
</comment>
<comment type="subcellular location">
    <subcellularLocation>
        <location evidence="1">Cytoplasm</location>
    </subcellularLocation>
</comment>
<comment type="similarity">
    <text evidence="1">Belongs to the HisA/HisF family.</text>
</comment>
<organism>
    <name type="scientific">Klebsiella pneumoniae (strain 342)</name>
    <dbReference type="NCBI Taxonomy" id="507522"/>
    <lineage>
        <taxon>Bacteria</taxon>
        <taxon>Pseudomonadati</taxon>
        <taxon>Pseudomonadota</taxon>
        <taxon>Gammaproteobacteria</taxon>
        <taxon>Enterobacterales</taxon>
        <taxon>Enterobacteriaceae</taxon>
        <taxon>Klebsiella/Raoultella group</taxon>
        <taxon>Klebsiella</taxon>
        <taxon>Klebsiella pneumoniae complex</taxon>
    </lineage>
</organism>